<dbReference type="EMBL" id="BX890616">
    <property type="protein sequence ID" value="CAI20698.1"/>
    <property type="status" value="ALT_INIT"/>
    <property type="molecule type" value="Genomic_DNA"/>
</dbReference>
<dbReference type="EMBL" id="BC122392">
    <property type="protein sequence ID" value="AAI22393.1"/>
    <property type="molecule type" value="mRNA"/>
</dbReference>
<dbReference type="RefSeq" id="NP_001038415.1">
    <property type="nucleotide sequence ID" value="NM_001044950.1"/>
</dbReference>
<dbReference type="SMR" id="Q0P3X8"/>
<dbReference type="FunCoup" id="Q0P3X8">
    <property type="interactions" value="1534"/>
</dbReference>
<dbReference type="STRING" id="7955.ENSDARP00000115287"/>
<dbReference type="PaxDb" id="7955-ENSDARP00000115287"/>
<dbReference type="Ensembl" id="ENSDART00000143642">
    <property type="protein sequence ID" value="ENSDARP00000115287"/>
    <property type="gene ID" value="ENSDARG00000045542"/>
</dbReference>
<dbReference type="GeneID" id="561019"/>
<dbReference type="KEGG" id="dre:561019"/>
<dbReference type="AGR" id="ZFIN:ZDB-GENE-030131-7438"/>
<dbReference type="CTD" id="389541"/>
<dbReference type="ZFIN" id="ZDB-GENE-030131-7438">
    <property type="gene designation" value="lamtor4"/>
</dbReference>
<dbReference type="eggNOG" id="ENOG502S3B2">
    <property type="taxonomic scope" value="Eukaryota"/>
</dbReference>
<dbReference type="HOGENOM" id="CLU_137556_1_0_1"/>
<dbReference type="InParanoid" id="Q0P3X8"/>
<dbReference type="OMA" id="MEMVRTA"/>
<dbReference type="OrthoDB" id="275011at2759"/>
<dbReference type="PhylomeDB" id="Q0P3X8"/>
<dbReference type="TreeFam" id="TF324352"/>
<dbReference type="Reactome" id="R-DRE-1632852">
    <property type="pathway name" value="Macroautophagy"/>
</dbReference>
<dbReference type="Reactome" id="R-DRE-165159">
    <property type="pathway name" value="MTOR signalling"/>
</dbReference>
<dbReference type="Reactome" id="R-DRE-166208">
    <property type="pathway name" value="mTORC1-mediated signalling"/>
</dbReference>
<dbReference type="Reactome" id="R-DRE-380972">
    <property type="pathway name" value="Energy dependent regulation of mTOR by LKB1-AMPK"/>
</dbReference>
<dbReference type="Reactome" id="R-DRE-5628897">
    <property type="pathway name" value="TP53 Regulates Metabolic Genes"/>
</dbReference>
<dbReference type="Reactome" id="R-DRE-8943724">
    <property type="pathway name" value="Regulation of PTEN gene transcription"/>
</dbReference>
<dbReference type="Reactome" id="R-DRE-9639288">
    <property type="pathway name" value="Amino acids regulate mTORC1"/>
</dbReference>
<dbReference type="PRO" id="PR:Q0P3X8"/>
<dbReference type="Proteomes" id="UP000000437">
    <property type="component" value="Chromosome 4"/>
</dbReference>
<dbReference type="Bgee" id="ENSDARG00000045542">
    <property type="expression patterns" value="Expressed in mature ovarian follicle and 27 other cell types or tissues"/>
</dbReference>
<dbReference type="GO" id="GO:0005765">
    <property type="term" value="C:lysosomal membrane"/>
    <property type="evidence" value="ECO:0000250"/>
    <property type="project" value="UniProtKB"/>
</dbReference>
<dbReference type="GO" id="GO:0005764">
    <property type="term" value="C:lysosome"/>
    <property type="evidence" value="ECO:0000250"/>
    <property type="project" value="UniProtKB"/>
</dbReference>
<dbReference type="GO" id="GO:0071986">
    <property type="term" value="C:Ragulator complex"/>
    <property type="evidence" value="ECO:0000250"/>
    <property type="project" value="UniProtKB"/>
</dbReference>
<dbReference type="GO" id="GO:0071230">
    <property type="term" value="P:cellular response to amino acid stimulus"/>
    <property type="evidence" value="ECO:0000250"/>
    <property type="project" value="UniProtKB"/>
</dbReference>
<dbReference type="GO" id="GO:0032008">
    <property type="term" value="P:positive regulation of TOR signaling"/>
    <property type="evidence" value="ECO:0000250"/>
    <property type="project" value="UniProtKB"/>
</dbReference>
<dbReference type="GO" id="GO:1904263">
    <property type="term" value="P:positive regulation of TORC1 signaling"/>
    <property type="evidence" value="ECO:0000250"/>
    <property type="project" value="UniProtKB"/>
</dbReference>
<dbReference type="GO" id="GO:0061462">
    <property type="term" value="P:protein localization to lysosome"/>
    <property type="evidence" value="ECO:0000250"/>
    <property type="project" value="UniProtKB"/>
</dbReference>
<dbReference type="GO" id="GO:0008361">
    <property type="term" value="P:regulation of cell size"/>
    <property type="evidence" value="ECO:0000250"/>
    <property type="project" value="UniProtKB"/>
</dbReference>
<dbReference type="InterPro" id="IPR034601">
    <property type="entry name" value="LAMTOR4"/>
</dbReference>
<dbReference type="PANTHER" id="PTHR33967">
    <property type="entry name" value="RAGULATOR COMPLEX PROTEIN LAMTOR4"/>
    <property type="match status" value="1"/>
</dbReference>
<dbReference type="PANTHER" id="PTHR33967:SF1">
    <property type="entry name" value="RAGULATOR COMPLEX PROTEIN LAMTOR4"/>
    <property type="match status" value="1"/>
</dbReference>
<feature type="chain" id="PRO_0000325844" description="Ragulator complex protein LAMTOR4">
    <location>
        <begin position="1"/>
        <end position="99"/>
    </location>
</feature>
<keyword id="KW-0458">Lysosome</keyword>
<keyword id="KW-0597">Phosphoprotein</keyword>
<keyword id="KW-1185">Reference proteome</keyword>
<accession>Q0P3X8</accession>
<accession>Q5RGI9</accession>
<name>LTOR4_DANRE</name>
<evidence type="ECO:0000250" key="1">
    <source>
        <dbReference type="UniProtKB" id="Q0VGL1"/>
    </source>
</evidence>
<evidence type="ECO:0000305" key="2"/>
<reference key="1">
    <citation type="journal article" date="2013" name="Nature">
        <title>The zebrafish reference genome sequence and its relationship to the human genome.</title>
        <authorList>
            <person name="Howe K."/>
            <person name="Clark M.D."/>
            <person name="Torroja C.F."/>
            <person name="Torrance J."/>
            <person name="Berthelot C."/>
            <person name="Muffato M."/>
            <person name="Collins J.E."/>
            <person name="Humphray S."/>
            <person name="McLaren K."/>
            <person name="Matthews L."/>
            <person name="McLaren S."/>
            <person name="Sealy I."/>
            <person name="Caccamo M."/>
            <person name="Churcher C."/>
            <person name="Scott C."/>
            <person name="Barrett J.C."/>
            <person name="Koch R."/>
            <person name="Rauch G.J."/>
            <person name="White S."/>
            <person name="Chow W."/>
            <person name="Kilian B."/>
            <person name="Quintais L.T."/>
            <person name="Guerra-Assuncao J.A."/>
            <person name="Zhou Y."/>
            <person name="Gu Y."/>
            <person name="Yen J."/>
            <person name="Vogel J.H."/>
            <person name="Eyre T."/>
            <person name="Redmond S."/>
            <person name="Banerjee R."/>
            <person name="Chi J."/>
            <person name="Fu B."/>
            <person name="Langley E."/>
            <person name="Maguire S.F."/>
            <person name="Laird G.K."/>
            <person name="Lloyd D."/>
            <person name="Kenyon E."/>
            <person name="Donaldson S."/>
            <person name="Sehra H."/>
            <person name="Almeida-King J."/>
            <person name="Loveland J."/>
            <person name="Trevanion S."/>
            <person name="Jones M."/>
            <person name="Quail M."/>
            <person name="Willey D."/>
            <person name="Hunt A."/>
            <person name="Burton J."/>
            <person name="Sims S."/>
            <person name="McLay K."/>
            <person name="Plumb B."/>
            <person name="Davis J."/>
            <person name="Clee C."/>
            <person name="Oliver K."/>
            <person name="Clark R."/>
            <person name="Riddle C."/>
            <person name="Elliot D."/>
            <person name="Threadgold G."/>
            <person name="Harden G."/>
            <person name="Ware D."/>
            <person name="Begum S."/>
            <person name="Mortimore B."/>
            <person name="Kerry G."/>
            <person name="Heath P."/>
            <person name="Phillimore B."/>
            <person name="Tracey A."/>
            <person name="Corby N."/>
            <person name="Dunn M."/>
            <person name="Johnson C."/>
            <person name="Wood J."/>
            <person name="Clark S."/>
            <person name="Pelan S."/>
            <person name="Griffiths G."/>
            <person name="Smith M."/>
            <person name="Glithero R."/>
            <person name="Howden P."/>
            <person name="Barker N."/>
            <person name="Lloyd C."/>
            <person name="Stevens C."/>
            <person name="Harley J."/>
            <person name="Holt K."/>
            <person name="Panagiotidis G."/>
            <person name="Lovell J."/>
            <person name="Beasley H."/>
            <person name="Henderson C."/>
            <person name="Gordon D."/>
            <person name="Auger K."/>
            <person name="Wright D."/>
            <person name="Collins J."/>
            <person name="Raisen C."/>
            <person name="Dyer L."/>
            <person name="Leung K."/>
            <person name="Robertson L."/>
            <person name="Ambridge K."/>
            <person name="Leongamornlert D."/>
            <person name="McGuire S."/>
            <person name="Gilderthorp R."/>
            <person name="Griffiths C."/>
            <person name="Manthravadi D."/>
            <person name="Nichol S."/>
            <person name="Barker G."/>
            <person name="Whitehead S."/>
            <person name="Kay M."/>
            <person name="Brown J."/>
            <person name="Murnane C."/>
            <person name="Gray E."/>
            <person name="Humphries M."/>
            <person name="Sycamore N."/>
            <person name="Barker D."/>
            <person name="Saunders D."/>
            <person name="Wallis J."/>
            <person name="Babbage A."/>
            <person name="Hammond S."/>
            <person name="Mashreghi-Mohammadi M."/>
            <person name="Barr L."/>
            <person name="Martin S."/>
            <person name="Wray P."/>
            <person name="Ellington A."/>
            <person name="Matthews N."/>
            <person name="Ellwood M."/>
            <person name="Woodmansey R."/>
            <person name="Clark G."/>
            <person name="Cooper J."/>
            <person name="Tromans A."/>
            <person name="Grafham D."/>
            <person name="Skuce C."/>
            <person name="Pandian R."/>
            <person name="Andrews R."/>
            <person name="Harrison E."/>
            <person name="Kimberley A."/>
            <person name="Garnett J."/>
            <person name="Fosker N."/>
            <person name="Hall R."/>
            <person name="Garner P."/>
            <person name="Kelly D."/>
            <person name="Bird C."/>
            <person name="Palmer S."/>
            <person name="Gehring I."/>
            <person name="Berger A."/>
            <person name="Dooley C.M."/>
            <person name="Ersan-Urun Z."/>
            <person name="Eser C."/>
            <person name="Geiger H."/>
            <person name="Geisler M."/>
            <person name="Karotki L."/>
            <person name="Kirn A."/>
            <person name="Konantz J."/>
            <person name="Konantz M."/>
            <person name="Oberlander M."/>
            <person name="Rudolph-Geiger S."/>
            <person name="Teucke M."/>
            <person name="Lanz C."/>
            <person name="Raddatz G."/>
            <person name="Osoegawa K."/>
            <person name="Zhu B."/>
            <person name="Rapp A."/>
            <person name="Widaa S."/>
            <person name="Langford C."/>
            <person name="Yang F."/>
            <person name="Schuster S.C."/>
            <person name="Carter N.P."/>
            <person name="Harrow J."/>
            <person name="Ning Z."/>
            <person name="Herrero J."/>
            <person name="Searle S.M."/>
            <person name="Enright A."/>
            <person name="Geisler R."/>
            <person name="Plasterk R.H."/>
            <person name="Lee C."/>
            <person name="Westerfield M."/>
            <person name="de Jong P.J."/>
            <person name="Zon L.I."/>
            <person name="Postlethwait J.H."/>
            <person name="Nusslein-Volhard C."/>
            <person name="Hubbard T.J."/>
            <person name="Roest Crollius H."/>
            <person name="Rogers J."/>
            <person name="Stemple D.L."/>
        </authorList>
    </citation>
    <scope>NUCLEOTIDE SEQUENCE [LARGE SCALE GENOMIC DNA]</scope>
    <source>
        <strain>Tuebingen</strain>
    </source>
</reference>
<reference key="2">
    <citation type="submission" date="2006-08" db="EMBL/GenBank/DDBJ databases">
        <authorList>
            <consortium name="NIH - Zebrafish Gene Collection (ZGC) project"/>
        </authorList>
    </citation>
    <scope>NUCLEOTIDE SEQUENCE [LARGE SCALE MRNA]</scope>
    <source>
        <tissue>Eye</tissue>
    </source>
</reference>
<protein>
    <recommendedName>
        <fullName>Ragulator complex protein LAMTOR4</fullName>
    </recommendedName>
    <alternativeName>
        <fullName>Late endosomal/lysosomal adaptor and MAPK and MTOR activator 4</fullName>
    </alternativeName>
</protein>
<comment type="function">
    <text evidence="1">As part of the Ragulator complex it is involved in amino acid sensing and activation of mTORC1, a signaling complex promoting cell growth in response to growth factors, energy levels, and amino acids. Activated by amino acids through a mechanism involving the lysosomal V-ATPase, the Ragulator plays a dual role for the small GTPases Rag (RagA/RRAGA, RagB/RRAGB, RagC/RRAGC and/or RagD/RRAGD): it (1) acts as a guanine nucleotide exchange factor (GEF), activating the small GTPases Rag and (2) mediates recruitment of Rag GTPases to the lysosome membrane. Activated Ragulator and Rag GTPases function as a scaffold recruiting mTORC1 to lysosomes where it is in turn activated.</text>
</comment>
<comment type="subunit">
    <text evidence="1">Part of the Ragulator complex composed of lamtor1, lamtor2, lamtor3, lamtor4 and lamtor5. The Ragulator complex interacts with slc38a9; the probable amino acid sensor. Component of the lysosomal folliculin complex (LFC).</text>
</comment>
<comment type="subcellular location">
    <subcellularLocation>
        <location evidence="1">Lysosome</location>
    </subcellularLocation>
</comment>
<comment type="similarity">
    <text evidence="2">Belongs to the LAMTOR4 family.</text>
</comment>
<comment type="sequence caution" evidence="2">
    <conflict type="erroneous initiation">
        <sequence resource="EMBL-CDS" id="CAI20698"/>
    </conflict>
</comment>
<organism>
    <name type="scientific">Danio rerio</name>
    <name type="common">Zebrafish</name>
    <name type="synonym">Brachydanio rerio</name>
    <dbReference type="NCBI Taxonomy" id="7955"/>
    <lineage>
        <taxon>Eukaryota</taxon>
        <taxon>Metazoa</taxon>
        <taxon>Chordata</taxon>
        <taxon>Craniata</taxon>
        <taxon>Vertebrata</taxon>
        <taxon>Euteleostomi</taxon>
        <taxon>Actinopterygii</taxon>
        <taxon>Neopterygii</taxon>
        <taxon>Teleostei</taxon>
        <taxon>Ostariophysi</taxon>
        <taxon>Cypriniformes</taxon>
        <taxon>Danionidae</taxon>
        <taxon>Danioninae</taxon>
        <taxon>Danio</taxon>
    </lineage>
</organism>
<proteinExistence type="inferred from homology"/>
<sequence>MTTALTQGLERIPDQLGYLVISEDGVLASAGELENDEHTAGVIMQMVRTACRFRLHGTAEPPFKRMSVMFEDYVYAVTISGQKVFVVKRQNNQREPVIV</sequence>
<gene>
    <name type="primary">lamtor4</name>
    <name type="ORF">si:dkey-159a18.7</name>
</gene>